<sequence>MAEETGALPSRTDFSAWYNEVIRRADIMDVRYPVKGLYVWYPFGFALRNHTYTLLRSLLNRDHEETLFPLLIPETEFMKEAEHIKGFEDEVYWVTHGGLSPLDVKLALRPTSETAIYPMYALWVRSHADLPLKLYQVVNTFRYETKHTRPLIRLREITSFMESHTVHTDWDDANKQVEYELGLATEFYRDLGVPIIISRRPDWDKFPGADFTMAIDAVMPDGRTLQIGTVHHLGDHFSTTYNITYEDVNGEQKLASQTCFGISERCIAAIIAVHGDDKGLVLPATVAPTQVVIIPIIVGKRGDEIMAAVEKLESELKAAGLRVKTDARDMRPGAKYYHWELHGVPLRVELGPRDLDNNQLVCANRLGVKTTIPRENAADSVKRLLDEAHDQILEKAEDHLSSHLKTVKTVDECNQSLEENIVIVHWCGEKACADKLEELTNSSLLGTGVRSKYVVDDEGPCIVCGKPGKTALVGRSY</sequence>
<keyword id="KW-0030">Aminoacyl-tRNA synthetase</keyword>
<keyword id="KW-0067">ATP-binding</keyword>
<keyword id="KW-0963">Cytoplasm</keyword>
<keyword id="KW-0436">Ligase</keyword>
<keyword id="KW-0547">Nucleotide-binding</keyword>
<keyword id="KW-0648">Protein biosynthesis</keyword>
<keyword id="KW-1185">Reference proteome</keyword>
<accession>A2ST96</accession>
<organism>
    <name type="scientific">Methanocorpusculum labreanum (strain ATCC 43576 / DSM 4855 / Z)</name>
    <dbReference type="NCBI Taxonomy" id="410358"/>
    <lineage>
        <taxon>Archaea</taxon>
        <taxon>Methanobacteriati</taxon>
        <taxon>Methanobacteriota</taxon>
        <taxon>Stenosarchaea group</taxon>
        <taxon>Methanomicrobia</taxon>
        <taxon>Methanomicrobiales</taxon>
        <taxon>Methanocorpusculaceae</taxon>
        <taxon>Methanocorpusculum</taxon>
    </lineage>
</organism>
<name>SYP_METLZ</name>
<feature type="chain" id="PRO_0000288420" description="Proline--tRNA ligase">
    <location>
        <begin position="1"/>
        <end position="477"/>
    </location>
</feature>
<comment type="function">
    <text evidence="1">Catalyzes the attachment of proline to tRNA(Pro) in a two-step reaction: proline is first activated by ATP to form Pro-AMP and then transferred to the acceptor end of tRNA(Pro).</text>
</comment>
<comment type="catalytic activity">
    <reaction evidence="1">
        <text>tRNA(Pro) + L-proline + ATP = L-prolyl-tRNA(Pro) + AMP + diphosphate</text>
        <dbReference type="Rhea" id="RHEA:14305"/>
        <dbReference type="Rhea" id="RHEA-COMP:9700"/>
        <dbReference type="Rhea" id="RHEA-COMP:9702"/>
        <dbReference type="ChEBI" id="CHEBI:30616"/>
        <dbReference type="ChEBI" id="CHEBI:33019"/>
        <dbReference type="ChEBI" id="CHEBI:60039"/>
        <dbReference type="ChEBI" id="CHEBI:78442"/>
        <dbReference type="ChEBI" id="CHEBI:78532"/>
        <dbReference type="ChEBI" id="CHEBI:456215"/>
        <dbReference type="EC" id="6.1.1.15"/>
    </reaction>
</comment>
<comment type="subunit">
    <text evidence="1">Homodimer.</text>
</comment>
<comment type="subcellular location">
    <subcellularLocation>
        <location evidence="1">Cytoplasm</location>
    </subcellularLocation>
</comment>
<comment type="domain">
    <text evidence="1">Consists of three domains: the N-terminal catalytic domain, the anticodon-binding domain and the C-terminal extension.</text>
</comment>
<comment type="similarity">
    <text evidence="1">Belongs to the class-II aminoacyl-tRNA synthetase family. ProS type 3 subfamily.</text>
</comment>
<reference key="1">
    <citation type="journal article" date="2009" name="Stand. Genomic Sci.">
        <title>Complete genome sequence of Methanocorpusculum labreanum type strain Z.</title>
        <authorList>
            <person name="Anderson I.J."/>
            <person name="Sieprawska-Lupa M."/>
            <person name="Goltsman E."/>
            <person name="Lapidus A."/>
            <person name="Copeland A."/>
            <person name="Glavina Del Rio T."/>
            <person name="Tice H."/>
            <person name="Dalin E."/>
            <person name="Barry K."/>
            <person name="Pitluck S."/>
            <person name="Hauser L."/>
            <person name="Land M."/>
            <person name="Lucas S."/>
            <person name="Richardson P."/>
            <person name="Whitman W.B."/>
            <person name="Kyrpides N.C."/>
        </authorList>
    </citation>
    <scope>NUCLEOTIDE SEQUENCE [LARGE SCALE GENOMIC DNA]</scope>
    <source>
        <strain>ATCC 43576 / DSM 4855 / Z</strain>
    </source>
</reference>
<evidence type="ECO:0000255" key="1">
    <source>
        <dbReference type="HAMAP-Rule" id="MF_01571"/>
    </source>
</evidence>
<protein>
    <recommendedName>
        <fullName evidence="1">Proline--tRNA ligase</fullName>
        <ecNumber evidence="1">6.1.1.15</ecNumber>
    </recommendedName>
    <alternativeName>
        <fullName evidence="1">Prolyl-tRNA synthetase</fullName>
        <shortName evidence="1">ProRS</shortName>
    </alternativeName>
</protein>
<proteinExistence type="inferred from homology"/>
<dbReference type="EC" id="6.1.1.15" evidence="1"/>
<dbReference type="EMBL" id="CP000559">
    <property type="protein sequence ID" value="ABN07552.1"/>
    <property type="molecule type" value="Genomic_DNA"/>
</dbReference>
<dbReference type="RefSeq" id="WP_011833755.1">
    <property type="nucleotide sequence ID" value="NC_008942.1"/>
</dbReference>
<dbReference type="SMR" id="A2ST96"/>
<dbReference type="STRING" id="410358.Mlab_1386"/>
<dbReference type="GeneID" id="4795368"/>
<dbReference type="KEGG" id="mla:Mlab_1386"/>
<dbReference type="eggNOG" id="arCOG00402">
    <property type="taxonomic scope" value="Archaea"/>
</dbReference>
<dbReference type="HOGENOM" id="CLU_001882_4_2_2"/>
<dbReference type="OrthoDB" id="7375at2157"/>
<dbReference type="Proteomes" id="UP000000365">
    <property type="component" value="Chromosome"/>
</dbReference>
<dbReference type="GO" id="GO:0017101">
    <property type="term" value="C:aminoacyl-tRNA synthetase multienzyme complex"/>
    <property type="evidence" value="ECO:0007669"/>
    <property type="project" value="TreeGrafter"/>
</dbReference>
<dbReference type="GO" id="GO:0005737">
    <property type="term" value="C:cytoplasm"/>
    <property type="evidence" value="ECO:0007669"/>
    <property type="project" value="UniProtKB-SubCell"/>
</dbReference>
<dbReference type="GO" id="GO:0005524">
    <property type="term" value="F:ATP binding"/>
    <property type="evidence" value="ECO:0007669"/>
    <property type="project" value="UniProtKB-UniRule"/>
</dbReference>
<dbReference type="GO" id="GO:0004827">
    <property type="term" value="F:proline-tRNA ligase activity"/>
    <property type="evidence" value="ECO:0007669"/>
    <property type="project" value="UniProtKB-UniRule"/>
</dbReference>
<dbReference type="GO" id="GO:0006433">
    <property type="term" value="P:prolyl-tRNA aminoacylation"/>
    <property type="evidence" value="ECO:0007669"/>
    <property type="project" value="UniProtKB-UniRule"/>
</dbReference>
<dbReference type="CDD" id="cd00862">
    <property type="entry name" value="ProRS_anticodon_zinc"/>
    <property type="match status" value="1"/>
</dbReference>
<dbReference type="CDD" id="cd00778">
    <property type="entry name" value="ProRS_core_arch_euk"/>
    <property type="match status" value="1"/>
</dbReference>
<dbReference type="FunFam" id="3.30.930.10:FF:000037">
    <property type="entry name" value="Proline--tRNA ligase"/>
    <property type="match status" value="1"/>
</dbReference>
<dbReference type="Gene3D" id="3.40.50.800">
    <property type="entry name" value="Anticodon-binding domain"/>
    <property type="match status" value="1"/>
</dbReference>
<dbReference type="Gene3D" id="3.30.930.10">
    <property type="entry name" value="Bira Bifunctional Protein, Domain 2"/>
    <property type="match status" value="1"/>
</dbReference>
<dbReference type="Gene3D" id="3.30.110.30">
    <property type="entry name" value="C-terminal domain of ProRS"/>
    <property type="match status" value="1"/>
</dbReference>
<dbReference type="HAMAP" id="MF_01571">
    <property type="entry name" value="Pro_tRNA_synth_type3"/>
    <property type="match status" value="1"/>
</dbReference>
<dbReference type="InterPro" id="IPR002314">
    <property type="entry name" value="aa-tRNA-synt_IIb"/>
</dbReference>
<dbReference type="InterPro" id="IPR006195">
    <property type="entry name" value="aa-tRNA-synth_II"/>
</dbReference>
<dbReference type="InterPro" id="IPR045864">
    <property type="entry name" value="aa-tRNA-synth_II/BPL/LPL"/>
</dbReference>
<dbReference type="InterPro" id="IPR004154">
    <property type="entry name" value="Anticodon-bd"/>
</dbReference>
<dbReference type="InterPro" id="IPR036621">
    <property type="entry name" value="Anticodon-bd_dom_sf"/>
</dbReference>
<dbReference type="InterPro" id="IPR002316">
    <property type="entry name" value="Pro-tRNA-ligase_IIa"/>
</dbReference>
<dbReference type="InterPro" id="IPR004499">
    <property type="entry name" value="Pro-tRNA-ligase_IIa_arc-type"/>
</dbReference>
<dbReference type="InterPro" id="IPR016061">
    <property type="entry name" value="Pro-tRNA_ligase_II_C"/>
</dbReference>
<dbReference type="InterPro" id="IPR017449">
    <property type="entry name" value="Pro-tRNA_synth_II"/>
</dbReference>
<dbReference type="InterPro" id="IPR033721">
    <property type="entry name" value="ProRS_core_arch_euk"/>
</dbReference>
<dbReference type="NCBIfam" id="TIGR00408">
    <property type="entry name" value="proS_fam_I"/>
    <property type="match status" value="1"/>
</dbReference>
<dbReference type="PANTHER" id="PTHR43382:SF2">
    <property type="entry name" value="BIFUNCTIONAL GLUTAMATE_PROLINE--TRNA LIGASE"/>
    <property type="match status" value="1"/>
</dbReference>
<dbReference type="PANTHER" id="PTHR43382">
    <property type="entry name" value="PROLYL-TRNA SYNTHETASE"/>
    <property type="match status" value="1"/>
</dbReference>
<dbReference type="Pfam" id="PF03129">
    <property type="entry name" value="HGTP_anticodon"/>
    <property type="match status" value="1"/>
</dbReference>
<dbReference type="Pfam" id="PF09180">
    <property type="entry name" value="ProRS-C_1"/>
    <property type="match status" value="1"/>
</dbReference>
<dbReference type="Pfam" id="PF00587">
    <property type="entry name" value="tRNA-synt_2b"/>
    <property type="match status" value="1"/>
</dbReference>
<dbReference type="PRINTS" id="PR01046">
    <property type="entry name" value="TRNASYNTHPRO"/>
</dbReference>
<dbReference type="SMART" id="SM00946">
    <property type="entry name" value="ProRS-C_1"/>
    <property type="match status" value="1"/>
</dbReference>
<dbReference type="SUPFAM" id="SSF64586">
    <property type="entry name" value="C-terminal domain of ProRS"/>
    <property type="match status" value="1"/>
</dbReference>
<dbReference type="SUPFAM" id="SSF52954">
    <property type="entry name" value="Class II aaRS ABD-related"/>
    <property type="match status" value="1"/>
</dbReference>
<dbReference type="SUPFAM" id="SSF55681">
    <property type="entry name" value="Class II aaRS and biotin synthetases"/>
    <property type="match status" value="1"/>
</dbReference>
<dbReference type="PROSITE" id="PS50862">
    <property type="entry name" value="AA_TRNA_LIGASE_II"/>
    <property type="match status" value="1"/>
</dbReference>
<gene>
    <name evidence="1" type="primary">proS</name>
    <name type="ordered locus">Mlab_1386</name>
</gene>